<comment type="similarity">
    <text evidence="1">Belongs to the universal ribosomal protein uS2 family.</text>
</comment>
<protein>
    <recommendedName>
        <fullName evidence="1">Small ribosomal subunit protein uS2</fullName>
    </recommendedName>
    <alternativeName>
        <fullName evidence="2">30S ribosomal protein S2</fullName>
    </alternativeName>
</protein>
<accession>Q03MW7</accession>
<feature type="chain" id="PRO_1000004096" description="Small ribosomal subunit protein uS2">
    <location>
        <begin position="1"/>
        <end position="255"/>
    </location>
</feature>
<proteinExistence type="inferred from homology"/>
<evidence type="ECO:0000255" key="1">
    <source>
        <dbReference type="HAMAP-Rule" id="MF_00291"/>
    </source>
</evidence>
<evidence type="ECO:0000305" key="2"/>
<organism>
    <name type="scientific">Streptococcus thermophilus (strain ATCC BAA-491 / LMD-9)</name>
    <dbReference type="NCBI Taxonomy" id="322159"/>
    <lineage>
        <taxon>Bacteria</taxon>
        <taxon>Bacillati</taxon>
        <taxon>Bacillota</taxon>
        <taxon>Bacilli</taxon>
        <taxon>Lactobacillales</taxon>
        <taxon>Streptococcaceae</taxon>
        <taxon>Streptococcus</taxon>
    </lineage>
</organism>
<sequence length="255" mass="28422">MAVISMKQLLEAGVHFGHQTRRWNPKMAKYIFTERNGIHVIDLQQTVKMVDTAYEFVREAAANDAVILFVGTKKQAAEAVAEEATRAGQYYINHRWLGGTLTNWNTIKKRIARLKEIKQMEADGTFEVLPKKEVALLNKQRARLEKFLGGIEDMPRIPDVIYIVDPHKEQIAVKEAKKLGIPVVAMVDTNADPDEIDVIIPANDDAIRAVKLITSKMADAIIEGKQGEDASVDFQEAAAADSIEEIVEVVEGDNN</sequence>
<gene>
    <name evidence="1" type="primary">rpsB</name>
    <name type="ordered locus">STER_0105</name>
</gene>
<reference key="1">
    <citation type="journal article" date="2006" name="Proc. Natl. Acad. Sci. U.S.A.">
        <title>Comparative genomics of the lactic acid bacteria.</title>
        <authorList>
            <person name="Makarova K.S."/>
            <person name="Slesarev A."/>
            <person name="Wolf Y.I."/>
            <person name="Sorokin A."/>
            <person name="Mirkin B."/>
            <person name="Koonin E.V."/>
            <person name="Pavlov A."/>
            <person name="Pavlova N."/>
            <person name="Karamychev V."/>
            <person name="Polouchine N."/>
            <person name="Shakhova V."/>
            <person name="Grigoriev I."/>
            <person name="Lou Y."/>
            <person name="Rohksar D."/>
            <person name="Lucas S."/>
            <person name="Huang K."/>
            <person name="Goodstein D.M."/>
            <person name="Hawkins T."/>
            <person name="Plengvidhya V."/>
            <person name="Welker D."/>
            <person name="Hughes J."/>
            <person name="Goh Y."/>
            <person name="Benson A."/>
            <person name="Baldwin K."/>
            <person name="Lee J.-H."/>
            <person name="Diaz-Muniz I."/>
            <person name="Dosti B."/>
            <person name="Smeianov V."/>
            <person name="Wechter W."/>
            <person name="Barabote R."/>
            <person name="Lorca G."/>
            <person name="Altermann E."/>
            <person name="Barrangou R."/>
            <person name="Ganesan B."/>
            <person name="Xie Y."/>
            <person name="Rawsthorne H."/>
            <person name="Tamir D."/>
            <person name="Parker C."/>
            <person name="Breidt F."/>
            <person name="Broadbent J.R."/>
            <person name="Hutkins R."/>
            <person name="O'Sullivan D."/>
            <person name="Steele J."/>
            <person name="Unlu G."/>
            <person name="Saier M.H. Jr."/>
            <person name="Klaenhammer T."/>
            <person name="Richardson P."/>
            <person name="Kozyavkin S."/>
            <person name="Weimer B.C."/>
            <person name="Mills D.A."/>
        </authorList>
    </citation>
    <scope>NUCLEOTIDE SEQUENCE [LARGE SCALE GENOMIC DNA]</scope>
    <source>
        <strain>ATCC BAA-491 / LMD-9</strain>
    </source>
</reference>
<keyword id="KW-0687">Ribonucleoprotein</keyword>
<keyword id="KW-0689">Ribosomal protein</keyword>
<dbReference type="EMBL" id="CP000419">
    <property type="protein sequence ID" value="ABJ65455.1"/>
    <property type="molecule type" value="Genomic_DNA"/>
</dbReference>
<dbReference type="RefSeq" id="WP_011680612.1">
    <property type="nucleotide sequence ID" value="NC_008532.1"/>
</dbReference>
<dbReference type="SMR" id="Q03MW7"/>
<dbReference type="KEGG" id="ste:STER_0105"/>
<dbReference type="HOGENOM" id="CLU_040318_1_2_9"/>
<dbReference type="GO" id="GO:0022627">
    <property type="term" value="C:cytosolic small ribosomal subunit"/>
    <property type="evidence" value="ECO:0007669"/>
    <property type="project" value="TreeGrafter"/>
</dbReference>
<dbReference type="GO" id="GO:0003735">
    <property type="term" value="F:structural constituent of ribosome"/>
    <property type="evidence" value="ECO:0007669"/>
    <property type="project" value="InterPro"/>
</dbReference>
<dbReference type="GO" id="GO:0006412">
    <property type="term" value="P:translation"/>
    <property type="evidence" value="ECO:0007669"/>
    <property type="project" value="UniProtKB-UniRule"/>
</dbReference>
<dbReference type="CDD" id="cd01425">
    <property type="entry name" value="RPS2"/>
    <property type="match status" value="1"/>
</dbReference>
<dbReference type="FunFam" id="1.10.287.610:FF:000001">
    <property type="entry name" value="30S ribosomal protein S2"/>
    <property type="match status" value="1"/>
</dbReference>
<dbReference type="Gene3D" id="3.40.50.10490">
    <property type="entry name" value="Glucose-6-phosphate isomerase like protein, domain 1"/>
    <property type="match status" value="1"/>
</dbReference>
<dbReference type="Gene3D" id="1.10.287.610">
    <property type="entry name" value="Helix hairpin bin"/>
    <property type="match status" value="1"/>
</dbReference>
<dbReference type="HAMAP" id="MF_00291_B">
    <property type="entry name" value="Ribosomal_uS2_B"/>
    <property type="match status" value="1"/>
</dbReference>
<dbReference type="InterPro" id="IPR001865">
    <property type="entry name" value="Ribosomal_uS2"/>
</dbReference>
<dbReference type="InterPro" id="IPR005706">
    <property type="entry name" value="Ribosomal_uS2_bac/mit/plastid"/>
</dbReference>
<dbReference type="InterPro" id="IPR018130">
    <property type="entry name" value="Ribosomal_uS2_CS"/>
</dbReference>
<dbReference type="InterPro" id="IPR023591">
    <property type="entry name" value="Ribosomal_uS2_flav_dom_sf"/>
</dbReference>
<dbReference type="NCBIfam" id="TIGR01011">
    <property type="entry name" value="rpsB_bact"/>
    <property type="match status" value="1"/>
</dbReference>
<dbReference type="PANTHER" id="PTHR12534">
    <property type="entry name" value="30S RIBOSOMAL PROTEIN S2 PROKARYOTIC AND ORGANELLAR"/>
    <property type="match status" value="1"/>
</dbReference>
<dbReference type="PANTHER" id="PTHR12534:SF0">
    <property type="entry name" value="SMALL RIBOSOMAL SUBUNIT PROTEIN US2M"/>
    <property type="match status" value="1"/>
</dbReference>
<dbReference type="Pfam" id="PF00318">
    <property type="entry name" value="Ribosomal_S2"/>
    <property type="match status" value="1"/>
</dbReference>
<dbReference type="PRINTS" id="PR00395">
    <property type="entry name" value="RIBOSOMALS2"/>
</dbReference>
<dbReference type="SUPFAM" id="SSF52313">
    <property type="entry name" value="Ribosomal protein S2"/>
    <property type="match status" value="1"/>
</dbReference>
<dbReference type="PROSITE" id="PS00962">
    <property type="entry name" value="RIBOSOMAL_S2_1"/>
    <property type="match status" value="1"/>
</dbReference>
<name>RS2_STRTD</name>